<organism>
    <name type="scientific">Methanosarcina mazei (strain ATCC BAA-159 / DSM 3647 / Goe1 / Go1 / JCM 11833 / OCM 88)</name>
    <name type="common">Methanosarcina frisia</name>
    <dbReference type="NCBI Taxonomy" id="192952"/>
    <lineage>
        <taxon>Archaea</taxon>
        <taxon>Methanobacteriati</taxon>
        <taxon>Methanobacteriota</taxon>
        <taxon>Stenosarchaea group</taxon>
        <taxon>Methanomicrobia</taxon>
        <taxon>Methanosarcinales</taxon>
        <taxon>Methanosarcinaceae</taxon>
        <taxon>Methanosarcina</taxon>
    </lineage>
</organism>
<feature type="chain" id="PRO_0000152567" description="Phosphomevalonate dehydratase small subunit">
    <location>
        <begin position="1"/>
        <end position="144"/>
    </location>
</feature>
<feature type="active site" description="Proton acceptor" evidence="1">
    <location>
        <position position="65"/>
    </location>
</feature>
<protein>
    <recommendedName>
        <fullName evidence="3">Phosphomevalonate dehydratase small subunit</fullName>
        <shortName evidence="3">PMDh small subunit</shortName>
        <shortName evidence="3">PMDh-S</shortName>
        <ecNumber evidence="5">4.2.1.182</ecNumber>
    </recommendedName>
</protein>
<accession>Q8PWQ2</accession>
<sequence length="144" mass="15482">MIPIKFKGRTISRGCAEGEVLISRDPISFLGSVDPRTGIVVEEKHSLAGKSIKGKVLVFPHGKGSTVGSYVMYQLKKNEAAPAAIINLETEPIVAVGAIISEIPLVDMLEKDPYEFLKDGDTVLVNGSEGYIELLKQGEGQAKK</sequence>
<comment type="function">
    <text evidence="2 5">Component of a hydro-lyase that catalyzes the dehydration of mevalonate 5-phosphate (MVA5P) to form trans-anhydromevalonate 5-phosphate (tAHMP) (Probable). Involved in the archaeal mevalonate (MVA) pathway, which provides fundamental precursors for isoprenoid biosynthesis, such as isopentenyl diphosphate (IPP) and dimethylallyl diphosphate (DMAPP) (PubMed:31924615).</text>
</comment>
<comment type="catalytic activity">
    <reaction evidence="5">
        <text>(R)-5-phosphomevalonate = (2E)-3-methyl-5-phosphooxypent-2-enoate + H2O</text>
        <dbReference type="Rhea" id="RHEA:78975"/>
        <dbReference type="ChEBI" id="CHEBI:15377"/>
        <dbReference type="ChEBI" id="CHEBI:58146"/>
        <dbReference type="ChEBI" id="CHEBI:229665"/>
        <dbReference type="EC" id="4.2.1.182"/>
    </reaction>
    <physiologicalReaction direction="left-to-right" evidence="5">
        <dbReference type="Rhea" id="RHEA:78976"/>
    </physiologicalReaction>
</comment>
<comment type="pathway">
    <text evidence="2">Isoprenoid biosynthesis; isopentenyl diphosphate biosynthesis via mevalonate pathway.</text>
</comment>
<comment type="subunit">
    <text evidence="1">Heterodimer composed of a large subunit (PMDh-L) and a small subunit (PMDh-S).</text>
</comment>
<comment type="similarity">
    <text evidence="1 4">Belongs to the AcnX type II small subunit family.</text>
</comment>
<evidence type="ECO:0000255" key="1">
    <source>
        <dbReference type="HAMAP-Rule" id="MF_00078"/>
    </source>
</evidence>
<evidence type="ECO:0000269" key="2">
    <source>
    </source>
</evidence>
<evidence type="ECO:0000303" key="3">
    <source>
    </source>
</evidence>
<evidence type="ECO:0000305" key="4"/>
<evidence type="ECO:0000305" key="5">
    <source>
    </source>
</evidence>
<evidence type="ECO:0000312" key="6">
    <source>
        <dbReference type="EMBL" id="AAM31220.1"/>
    </source>
</evidence>
<name>PMDHS_METMA</name>
<keyword id="KW-0414">Isoprene biosynthesis</keyword>
<keyword id="KW-0456">Lyase</keyword>
<reference key="1">
    <citation type="journal article" date="2002" name="J. Mol. Microbiol. Biotechnol.">
        <title>The genome of Methanosarcina mazei: evidence for lateral gene transfer between Bacteria and Archaea.</title>
        <authorList>
            <person name="Deppenmeier U."/>
            <person name="Johann A."/>
            <person name="Hartsch T."/>
            <person name="Merkl R."/>
            <person name="Schmitz R.A."/>
            <person name="Martinez-Arias R."/>
            <person name="Henne A."/>
            <person name="Wiezer A."/>
            <person name="Baeumer S."/>
            <person name="Jacobi C."/>
            <person name="Brueggemann H."/>
            <person name="Lienard T."/>
            <person name="Christmann A."/>
            <person name="Boemecke M."/>
            <person name="Steckel S."/>
            <person name="Bhattacharyya A."/>
            <person name="Lykidis A."/>
            <person name="Overbeek R."/>
            <person name="Klenk H.-P."/>
            <person name="Gunsalus R.P."/>
            <person name="Fritz H.-J."/>
            <person name="Gottschalk G."/>
        </authorList>
    </citation>
    <scope>NUCLEOTIDE SEQUENCE [LARGE SCALE GENOMIC DNA]</scope>
    <source>
        <strain>ATCC BAA-159 / DSM 3647 / Goe1 / Go1 / JCM 11833 / OCM 88</strain>
    </source>
</reference>
<reference key="2">
    <citation type="journal article" date="2020" name="Appl. Environ. Microbiol.">
        <title>Reconstruction of the 'Archaeal' Mevalonate Pathway from the Methanogenic Archaeon Methanosarcina mazei in Escherichia coli Cells.</title>
        <authorList>
            <person name="Yoshida R."/>
            <person name="Yoshimura T."/>
            <person name="Hemmi H."/>
        </authorList>
    </citation>
    <scope>FUNCTION IN MEVALONATE BIOSYNTHESIS</scope>
    <scope>PATHWAY</scope>
    <source>
        <strain>ATCC BAA-159 / DSM 3647 / Goe1 / Go1 / JCM 11833 / OCM 88</strain>
    </source>
</reference>
<proteinExistence type="evidence at protein level"/>
<dbReference type="EC" id="4.2.1.182" evidence="5"/>
<dbReference type="EMBL" id="AE008384">
    <property type="protein sequence ID" value="AAM31220.1"/>
    <property type="molecule type" value="Genomic_DNA"/>
</dbReference>
<dbReference type="RefSeq" id="WP_011033470.1">
    <property type="nucleotide sequence ID" value="NC_003901.1"/>
</dbReference>
<dbReference type="SMR" id="Q8PWQ2"/>
<dbReference type="KEGG" id="mma:MM_1524"/>
<dbReference type="PATRIC" id="fig|192952.21.peg.1760"/>
<dbReference type="eggNOG" id="arCOG04279">
    <property type="taxonomic scope" value="Archaea"/>
</dbReference>
<dbReference type="HOGENOM" id="CLU_141583_2_0_2"/>
<dbReference type="UniPathway" id="UPA00057"/>
<dbReference type="Proteomes" id="UP000000595">
    <property type="component" value="Chromosome"/>
</dbReference>
<dbReference type="GO" id="GO:0016836">
    <property type="term" value="F:hydro-lyase activity"/>
    <property type="evidence" value="ECO:0007669"/>
    <property type="project" value="UniProtKB-UniRule"/>
</dbReference>
<dbReference type="GO" id="GO:0019287">
    <property type="term" value="P:isopentenyl diphosphate biosynthetic process, mevalonate pathway"/>
    <property type="evidence" value="ECO:0007669"/>
    <property type="project" value="UniProtKB-UniRule"/>
</dbReference>
<dbReference type="CDD" id="cd01356">
    <property type="entry name" value="AcnX_swivel"/>
    <property type="match status" value="1"/>
</dbReference>
<dbReference type="Gene3D" id="3.50.30.10">
    <property type="entry name" value="Phosphohistidine domain"/>
    <property type="match status" value="1"/>
</dbReference>
<dbReference type="HAMAP" id="MF_00078">
    <property type="entry name" value="PMDh_S"/>
    <property type="match status" value="1"/>
</dbReference>
<dbReference type="InterPro" id="IPR012016">
    <property type="entry name" value="PMDh-S-like"/>
</dbReference>
<dbReference type="InterPro" id="IPR002840">
    <property type="entry name" value="PMDh-S-like_dom"/>
</dbReference>
<dbReference type="InterPro" id="IPR020794">
    <property type="entry name" value="PMDh_S"/>
</dbReference>
<dbReference type="NCBIfam" id="NF003046">
    <property type="entry name" value="PRK03955.1"/>
    <property type="match status" value="1"/>
</dbReference>
<dbReference type="PANTHER" id="PTHR36577">
    <property type="entry name" value="DUF521 DOMAIN PROTEIN (AFU_ORTHOLOGUE AFUA_6G00490)"/>
    <property type="match status" value="1"/>
</dbReference>
<dbReference type="PANTHER" id="PTHR36577:SF3">
    <property type="entry name" value="DUF521 DOMAIN PROTEIN (AFU_ORTHOLOGUE AFUA_6G00490)"/>
    <property type="match status" value="1"/>
</dbReference>
<dbReference type="Pfam" id="PF01989">
    <property type="entry name" value="AcnX_swivel_put"/>
    <property type="match status" value="1"/>
</dbReference>
<dbReference type="PIRSF" id="PIRSF004966">
    <property type="entry name" value="UCP004966"/>
    <property type="match status" value="1"/>
</dbReference>
<dbReference type="SUPFAM" id="SSF52016">
    <property type="entry name" value="LeuD/IlvD-like"/>
    <property type="match status" value="1"/>
</dbReference>
<gene>
    <name evidence="6" type="ordered locus">MM_1524</name>
</gene>